<proteinExistence type="evidence at protein level"/>
<organism>
    <name type="scientific">Bos taurus</name>
    <name type="common">Bovine</name>
    <dbReference type="NCBI Taxonomy" id="9913"/>
    <lineage>
        <taxon>Eukaryota</taxon>
        <taxon>Metazoa</taxon>
        <taxon>Chordata</taxon>
        <taxon>Craniata</taxon>
        <taxon>Vertebrata</taxon>
        <taxon>Euteleostomi</taxon>
        <taxon>Mammalia</taxon>
        <taxon>Eutheria</taxon>
        <taxon>Laurasiatheria</taxon>
        <taxon>Artiodactyla</taxon>
        <taxon>Ruminantia</taxon>
        <taxon>Pecora</taxon>
        <taxon>Bovidae</taxon>
        <taxon>Bovinae</taxon>
        <taxon>Bos</taxon>
    </lineage>
</organism>
<sequence length="112" mass="11998">MAAALARLGLRSVKQVRVQFCPFEKNVESTRTFLQAVSSEKVRSTNLNCSVIADVRHDGSEPCVDVLFGDGHRLIMRGAHLTAQEMLSAFASHIQARGAAASGDKPSASTGR</sequence>
<protein>
    <recommendedName>
        <fullName evidence="4">Large ribosomal subunit protein mL53</fullName>
    </recommendedName>
    <alternativeName>
        <fullName>39S ribosomal protein L53, mitochondrial</fullName>
        <shortName>L53mt</shortName>
        <shortName>MRP-L53</shortName>
    </alternativeName>
</protein>
<feature type="transit peptide" description="Mitochondrion" evidence="2">
    <location>
        <begin position="1"/>
        <end status="unknown"/>
    </location>
</feature>
<feature type="chain" id="PRO_0000261663" description="Large ribosomal subunit protein mL53">
    <location>
        <begin status="unknown"/>
        <end position="112"/>
    </location>
</feature>
<dbReference type="EMBL" id="BC105487">
    <property type="protein sequence ID" value="AAI05488.1"/>
    <property type="molecule type" value="mRNA"/>
</dbReference>
<dbReference type="RefSeq" id="NP_001039391.1">
    <property type="nucleotide sequence ID" value="NM_001045926.2"/>
</dbReference>
<dbReference type="SMR" id="Q2HJF1"/>
<dbReference type="FunCoup" id="Q2HJF1">
    <property type="interactions" value="697"/>
</dbReference>
<dbReference type="STRING" id="9913.ENSBTAP00000022082"/>
<dbReference type="PaxDb" id="9913-ENSBTAP00000022082"/>
<dbReference type="Ensembl" id="ENSBTAT00000022082.4">
    <property type="protein sequence ID" value="ENSBTAP00000022082.3"/>
    <property type="gene ID" value="ENSBTAG00000016599.4"/>
</dbReference>
<dbReference type="GeneID" id="505728"/>
<dbReference type="KEGG" id="bta:505728"/>
<dbReference type="CTD" id="116540"/>
<dbReference type="VEuPathDB" id="HostDB:ENSBTAG00000016599"/>
<dbReference type="VGNC" id="VGNC:31648">
    <property type="gene designation" value="MRPL53"/>
</dbReference>
<dbReference type="eggNOG" id="ENOG502S5X4">
    <property type="taxonomic scope" value="Eukaryota"/>
</dbReference>
<dbReference type="GeneTree" id="ENSGT00390000001440"/>
<dbReference type="HOGENOM" id="CLU_175193_0_0_1"/>
<dbReference type="InParanoid" id="Q2HJF1"/>
<dbReference type="OMA" id="CKMWERI"/>
<dbReference type="OrthoDB" id="6618793at2759"/>
<dbReference type="TreeFam" id="TF300292"/>
<dbReference type="Reactome" id="R-BTA-5389840">
    <property type="pathway name" value="Mitochondrial translation elongation"/>
</dbReference>
<dbReference type="Reactome" id="R-BTA-5419276">
    <property type="pathway name" value="Mitochondrial translation termination"/>
</dbReference>
<dbReference type="Proteomes" id="UP000009136">
    <property type="component" value="Chromosome 11"/>
</dbReference>
<dbReference type="Bgee" id="ENSBTAG00000016599">
    <property type="expression patterns" value="Expressed in tongue muscle and 105 other cell types or tissues"/>
</dbReference>
<dbReference type="GO" id="GO:0005743">
    <property type="term" value="C:mitochondrial inner membrane"/>
    <property type="evidence" value="ECO:0000304"/>
    <property type="project" value="Reactome"/>
</dbReference>
<dbReference type="GO" id="GO:0005762">
    <property type="term" value="C:mitochondrial large ribosomal subunit"/>
    <property type="evidence" value="ECO:0000250"/>
    <property type="project" value="UniProtKB"/>
</dbReference>
<dbReference type="FunFam" id="3.40.30.10:FF:000215">
    <property type="entry name" value="39S ribosomal protein L53, mitochondrial"/>
    <property type="match status" value="1"/>
</dbReference>
<dbReference type="Gene3D" id="3.40.30.10">
    <property type="entry name" value="Glutaredoxin"/>
    <property type="match status" value="1"/>
</dbReference>
<dbReference type="InterPro" id="IPR052473">
    <property type="entry name" value="mtLSU_mL53"/>
</dbReference>
<dbReference type="InterPro" id="IPR019716">
    <property type="entry name" value="Ribosomal_mL53"/>
</dbReference>
<dbReference type="PANTHER" id="PTHR33618">
    <property type="entry name" value="39S RIBOSOMAL PROTEIN L53, MITOCHONDRIAL"/>
    <property type="match status" value="1"/>
</dbReference>
<dbReference type="PANTHER" id="PTHR33618:SF1">
    <property type="entry name" value="LARGE RIBOSOMAL SUBUNIT PROTEIN ML53"/>
    <property type="match status" value="1"/>
</dbReference>
<dbReference type="Pfam" id="PF10780">
    <property type="entry name" value="MRP_L53"/>
    <property type="match status" value="1"/>
</dbReference>
<name>RM53_BOVIN</name>
<evidence type="ECO:0000250" key="1">
    <source>
        <dbReference type="UniProtKB" id="Q96EL3"/>
    </source>
</evidence>
<evidence type="ECO:0000255" key="2"/>
<evidence type="ECO:0000269" key="3">
    <source>
    </source>
</evidence>
<evidence type="ECO:0000305" key="4"/>
<comment type="subunit">
    <text evidence="1">Component of the mitochondrial ribosome large subunit (39S) which comprises a 16S rRNA and about 50 distinct proteins.</text>
</comment>
<comment type="subcellular location">
    <subcellularLocation>
        <location evidence="3">Mitochondrion</location>
    </subcellularLocation>
</comment>
<comment type="similarity">
    <text evidence="4">Belongs to the mitochondrion-specific ribosomal protein mL53 family.</text>
</comment>
<gene>
    <name type="primary">MRPL53</name>
</gene>
<accession>Q2HJF1</accession>
<keyword id="KW-0496">Mitochondrion</keyword>
<keyword id="KW-1185">Reference proteome</keyword>
<keyword id="KW-0687">Ribonucleoprotein</keyword>
<keyword id="KW-0689">Ribosomal protein</keyword>
<keyword id="KW-0809">Transit peptide</keyword>
<reference key="1">
    <citation type="submission" date="2005-09" db="EMBL/GenBank/DDBJ databases">
        <authorList>
            <consortium name="NIH - Mammalian Gene Collection (MGC) project"/>
        </authorList>
    </citation>
    <scope>NUCLEOTIDE SEQUENCE [LARGE SCALE MRNA]</scope>
    <source>
        <strain>Hereford</strain>
        <tissue>Thymus</tissue>
    </source>
</reference>
<reference key="2">
    <citation type="journal article" date="2001" name="J. Biol. Chem.">
        <title>The large subunit of the mammalian mitochondrial ribosome. Analysis of the complement of ribosomal proteins present.</title>
        <authorList>
            <person name="Koc E.C."/>
            <person name="Burkhart W."/>
            <person name="Blackburn K."/>
            <person name="Moyer M.B."/>
            <person name="Schlatzer D.M."/>
            <person name="Moseley A."/>
            <person name="Spremulli L.L."/>
        </authorList>
    </citation>
    <scope>IDENTIFICATION BY MASS SPECTROMETRY</scope>
    <scope>SUBCELLULAR LOCATION</scope>
</reference>